<organism>
    <name type="scientific">Lake Victoria marburgvirus (strain Ravn-87)</name>
    <name type="common">MARV</name>
    <name type="synonym">Marburg virus (strain Kenya/Ravn/1987)</name>
    <dbReference type="NCBI Taxonomy" id="378809"/>
    <lineage>
        <taxon>Viruses</taxon>
        <taxon>Riboviria</taxon>
        <taxon>Orthornavirae</taxon>
        <taxon>Negarnaviricota</taxon>
        <taxon>Haploviricotina</taxon>
        <taxon>Monjiviricetes</taxon>
        <taxon>Mononegavirales</taxon>
        <taxon>Filoviridae</taxon>
        <taxon>Orthomarburgvirus</taxon>
        <taxon>Orthomarburgvirus marburgense</taxon>
    </lineage>
</organism>
<accession>Q1PDC4</accession>
<keyword id="KW-0067">ATP-binding</keyword>
<keyword id="KW-1035">Host cytoplasm</keyword>
<keyword id="KW-0378">Hydrolase</keyword>
<keyword id="KW-0489">Methyltransferase</keyword>
<keyword id="KW-0506">mRNA capping</keyword>
<keyword id="KW-0507">mRNA processing</keyword>
<keyword id="KW-0511">Multifunctional enzyme</keyword>
<keyword id="KW-0547">Nucleotide-binding</keyword>
<keyword id="KW-0548">Nucleotidyltransferase</keyword>
<keyword id="KW-0696">RNA-directed RNA polymerase</keyword>
<keyword id="KW-0949">S-adenosyl-L-methionine</keyword>
<keyword id="KW-0808">Transferase</keyword>
<keyword id="KW-0693">Viral RNA replication</keyword>
<keyword id="KW-0946">Virion</keyword>
<reference key="1">
    <citation type="journal article" date="2006" name="J. Virol.">
        <title>Marburgvirus genomics and association with a large hemorrhagic fever outbreak in Angola.</title>
        <authorList>
            <person name="Towner J.S."/>
            <person name="Khristova M.L."/>
            <person name="Sealy T.K."/>
            <person name="Vincent M.J."/>
            <person name="Erickson B.R."/>
            <person name="Bawiec D.A."/>
            <person name="Hartman A.L."/>
            <person name="Comer J.A."/>
            <person name="Zaki S.R."/>
            <person name="Stroeher U."/>
            <person name="Gomes da Silva F."/>
            <person name="del Castillo F."/>
            <person name="Rollin P.E."/>
            <person name="Ksiazek T.G."/>
            <person name="Nichol S.T."/>
        </authorList>
    </citation>
    <scope>NUCLEOTIDE SEQUENCE [GENOMIC RNA]</scope>
</reference>
<comment type="function">
    <text evidence="2">RNA-directed RNA polymerase that catalyzes the transcription of viral mRNAs, their capping and polyadenylation. The template is composed of the viral RNA tightly encapsidated by the nucleoprotein (N). The viral polymerase binds to the genomic RNA at the 3' leader promoter, and transcribes subsequently all viral mRNAs with a decreasing efficiency. The first gene is the most transcribed, and the last the least transcribed. The viral phosphoprotein acts as a processivity factor. Capping is concomitant with initiation of mRNA transcription. Indeed, a GDP polyribonucleotidyl transferase (PRNTase) adds the cap structure when the nascent RNA chain length has reached few nucleotides. Ribose 2'-O methylation of viral mRNA cap precedes and facilitates subsequent guanine-N-7 methylation, both activities being carried by the viral polymerase. Polyadenylation of mRNAs occur by a stuttering mechanism at a slipery stop site present at the end viral genes. After finishing transcription of a mRNA, the polymerase can resume transcription of the downstream gene.</text>
</comment>
<comment type="function">
    <text evidence="2">RNA-directed RNA polymerase that catalyzes the replication of viral genomic RNA. The template is composed of the viral RNA tightly encapsidated by the nucleoprotein (N). The replicase mode is dependent on intracellular N protein concentration. In this mode, the polymerase replicates the whole viral genome without recognizing transcriptional signals, and the replicated genome is not caped or polyadenylated.</text>
</comment>
<comment type="catalytic activity">
    <reaction evidence="4">
        <text>RNA(n) + a ribonucleoside 5'-triphosphate = RNA(n+1) + diphosphate</text>
        <dbReference type="Rhea" id="RHEA:21248"/>
        <dbReference type="Rhea" id="RHEA-COMP:14527"/>
        <dbReference type="Rhea" id="RHEA-COMP:17342"/>
        <dbReference type="ChEBI" id="CHEBI:33019"/>
        <dbReference type="ChEBI" id="CHEBI:61557"/>
        <dbReference type="ChEBI" id="CHEBI:140395"/>
        <dbReference type="EC" id="2.7.7.48"/>
    </reaction>
</comment>
<comment type="catalytic activity">
    <reaction evidence="2">
        <text>a 5'-end (5'-triphosphoguanosine)-adenylyl-adenylyl-cytidylyl-adenosine in mRNA + 2 S-adenosyl-L-methionine = a 5'-end (N(7)-methyl 5'-triphosphoguanosine)-(2'-O-methyladenylyl)-adenylyl-cytidylyl-adenosine in mRNA + 2 S-adenosyl-L-homocysteine + H(+)</text>
        <dbReference type="Rhea" id="RHEA:65376"/>
        <dbReference type="Rhea" id="RHEA-COMP:16797"/>
        <dbReference type="Rhea" id="RHEA-COMP:16798"/>
        <dbReference type="ChEBI" id="CHEBI:15378"/>
        <dbReference type="ChEBI" id="CHEBI:57856"/>
        <dbReference type="ChEBI" id="CHEBI:59789"/>
        <dbReference type="ChEBI" id="CHEBI:156483"/>
        <dbReference type="ChEBI" id="CHEBI:156484"/>
        <dbReference type="EC" id="2.1.1.375"/>
    </reaction>
</comment>
<comment type="catalytic activity">
    <reaction evidence="2">
        <text>a 5'-end (5'-triphosphoguanosine)-adenylyl-adenylyl-cytidylyl-adenosine in mRNA + S-adenosyl-L-methionine = a 5'-end (5'-triphosphoguanosine)-(2'-O-methyladenylyl)-adenylyl-cytidylyl-adenosine in mRNA + S-adenosyl-L-homocysteine + H(+)</text>
        <dbReference type="Rhea" id="RHEA:65380"/>
        <dbReference type="Rhea" id="RHEA-COMP:16797"/>
        <dbReference type="Rhea" id="RHEA-COMP:16801"/>
        <dbReference type="ChEBI" id="CHEBI:15378"/>
        <dbReference type="ChEBI" id="CHEBI:57856"/>
        <dbReference type="ChEBI" id="CHEBI:59789"/>
        <dbReference type="ChEBI" id="CHEBI:156482"/>
        <dbReference type="ChEBI" id="CHEBI:156484"/>
    </reaction>
</comment>
<comment type="catalytic activity">
    <reaction evidence="3">
        <text>a 5'-end triphospho-adenylyl-adenylyl-cytidylyl-adenosine in mRNA + GDP + H(+) = a 5'-end (5'-triphosphoguanosine)-adenylyl-adenylyl-cytidylyl-adenosine in mRNA + diphosphate</text>
        <dbReference type="Rhea" id="RHEA:65436"/>
        <dbReference type="Rhea" id="RHEA-COMP:16797"/>
        <dbReference type="Rhea" id="RHEA-COMP:16799"/>
        <dbReference type="ChEBI" id="CHEBI:15378"/>
        <dbReference type="ChEBI" id="CHEBI:33019"/>
        <dbReference type="ChEBI" id="CHEBI:58189"/>
        <dbReference type="ChEBI" id="CHEBI:156484"/>
        <dbReference type="ChEBI" id="CHEBI:156503"/>
        <dbReference type="EC" id="2.7.7.88"/>
    </reaction>
</comment>
<comment type="catalytic activity">
    <reaction evidence="2">
        <text>a 5'-end (5'-triphosphoguanosine)-(2'-O-methyladenylyl)-adenylyl-cytidylyl-adenosine in mRNA + S-adenosyl-L-methionine = a 5'-end (N(7)-methyl 5'-triphosphoguanosine)-(2'-O-methyladenylyl)-adenylyl-cytidylyl-adenosine in mRNA + S-adenosyl-L-homocysteine</text>
        <dbReference type="Rhea" id="RHEA:65440"/>
        <dbReference type="Rhea" id="RHEA-COMP:16798"/>
        <dbReference type="Rhea" id="RHEA-COMP:16801"/>
        <dbReference type="ChEBI" id="CHEBI:57856"/>
        <dbReference type="ChEBI" id="CHEBI:59789"/>
        <dbReference type="ChEBI" id="CHEBI:156482"/>
        <dbReference type="ChEBI" id="CHEBI:156483"/>
    </reaction>
</comment>
<comment type="catalytic activity">
    <reaction evidence="3">
        <text>GTP + H2O = GDP + phosphate + H(+)</text>
        <dbReference type="Rhea" id="RHEA:19669"/>
        <dbReference type="ChEBI" id="CHEBI:15377"/>
        <dbReference type="ChEBI" id="CHEBI:15378"/>
        <dbReference type="ChEBI" id="CHEBI:37565"/>
        <dbReference type="ChEBI" id="CHEBI:43474"/>
        <dbReference type="ChEBI" id="CHEBI:58189"/>
    </reaction>
</comment>
<comment type="subcellular location">
    <subcellularLocation>
        <location>Host cytoplasm</location>
    </subcellularLocation>
    <subcellularLocation>
        <location evidence="1">Virion</location>
    </subcellularLocation>
</comment>
<organismHost>
    <name type="scientific">Chlorocebus aethiops</name>
    <name type="common">Green monkey</name>
    <name type="synonym">Cercopithecus aethiops</name>
    <dbReference type="NCBI Taxonomy" id="9534"/>
</organismHost>
<organismHost>
    <name type="scientific">Homo sapiens</name>
    <name type="common">Human</name>
    <dbReference type="NCBI Taxonomy" id="9606"/>
</organismHost>
<organismHost>
    <name type="scientific">Rousettus aegyptiacus</name>
    <name type="common">Egyptian fruit bat</name>
    <name type="synonym">Pteropus aegyptiacus</name>
    <dbReference type="NCBI Taxonomy" id="9407"/>
</organismHost>
<proteinExistence type="inferred from homology"/>
<dbReference type="EC" id="2.7.7.48" evidence="3"/>
<dbReference type="EC" id="3.6.1.-" evidence="2"/>
<dbReference type="EC" id="2.7.7.88" evidence="2"/>
<dbReference type="EC" id="2.1.1.375" evidence="2"/>
<dbReference type="EMBL" id="DQ447649">
    <property type="protein sequence ID" value="ABE27074.1"/>
    <property type="molecule type" value="Genomic_RNA"/>
</dbReference>
<dbReference type="SMR" id="Q1PDC4"/>
<dbReference type="Proteomes" id="UP000008239">
    <property type="component" value="Genome"/>
</dbReference>
<dbReference type="GO" id="GO:0030430">
    <property type="term" value="C:host cell cytoplasm"/>
    <property type="evidence" value="ECO:0007669"/>
    <property type="project" value="UniProtKB-SubCell"/>
</dbReference>
<dbReference type="GO" id="GO:0044423">
    <property type="term" value="C:virion component"/>
    <property type="evidence" value="ECO:0007669"/>
    <property type="project" value="UniProtKB-KW"/>
</dbReference>
<dbReference type="GO" id="GO:0005524">
    <property type="term" value="F:ATP binding"/>
    <property type="evidence" value="ECO:0007669"/>
    <property type="project" value="UniProtKB-KW"/>
</dbReference>
<dbReference type="GO" id="GO:0003924">
    <property type="term" value="F:GTPase activity"/>
    <property type="evidence" value="ECO:0007669"/>
    <property type="project" value="RHEA"/>
</dbReference>
<dbReference type="GO" id="GO:0004482">
    <property type="term" value="F:mRNA 5'-cap (guanine-N7-)-methyltransferase activity"/>
    <property type="evidence" value="ECO:0007669"/>
    <property type="project" value="InterPro"/>
</dbReference>
<dbReference type="GO" id="GO:0003968">
    <property type="term" value="F:RNA-directed RNA polymerase activity"/>
    <property type="evidence" value="ECO:0007669"/>
    <property type="project" value="UniProtKB-KW"/>
</dbReference>
<dbReference type="GO" id="GO:0039689">
    <property type="term" value="P:negative stranded viral RNA replication"/>
    <property type="evidence" value="ECO:0000250"/>
    <property type="project" value="UniProtKB"/>
</dbReference>
<dbReference type="GO" id="GO:0039697">
    <property type="term" value="P:negative stranded viral RNA transcription"/>
    <property type="evidence" value="ECO:0000250"/>
    <property type="project" value="UniProtKB"/>
</dbReference>
<dbReference type="InterPro" id="IPR039736">
    <property type="entry name" value="L_poly_C"/>
</dbReference>
<dbReference type="InterPro" id="IPR026890">
    <property type="entry name" value="Mononeg_mRNAcap"/>
</dbReference>
<dbReference type="InterPro" id="IPR014023">
    <property type="entry name" value="Mononeg_RNA_pol_cat"/>
</dbReference>
<dbReference type="InterPro" id="IPR025786">
    <property type="entry name" value="Mononega_L_MeTrfase"/>
</dbReference>
<dbReference type="InterPro" id="IPR017235">
    <property type="entry name" value="RNA-dir_pol_L_filovirus"/>
</dbReference>
<dbReference type="NCBIfam" id="TIGR04198">
    <property type="entry name" value="paramyx_RNAcap"/>
    <property type="match status" value="1"/>
</dbReference>
<dbReference type="Pfam" id="PF14318">
    <property type="entry name" value="Mononeg_mRNAcap"/>
    <property type="match status" value="1"/>
</dbReference>
<dbReference type="Pfam" id="PF00946">
    <property type="entry name" value="Mononeg_RNA_pol"/>
    <property type="match status" value="1"/>
</dbReference>
<dbReference type="PIRSF" id="PIRSF037548">
    <property type="entry name" value="RNA_pol_Filoviridae"/>
    <property type="match status" value="1"/>
</dbReference>
<dbReference type="PROSITE" id="PS50526">
    <property type="entry name" value="RDRP_SSRNA_NEG_NONSEG"/>
    <property type="match status" value="1"/>
</dbReference>
<dbReference type="PROSITE" id="PS51590">
    <property type="entry name" value="SAM_MT_MNV_L"/>
    <property type="match status" value="1"/>
</dbReference>
<sequence>MQHPTQYPDARLSSPIILDQCDLLTRSLGLYSHYSHNPKLRNCRIPYHIYRLRNSTALKTFLQNCSILTVPFHSIWDHIITSIQHDAINHINDFKYLLPSELIKYANWDNEFLRVFLNKILRLDHAFTNSAKLQCEDFSPKENPYYWGMLLLVHLSQLARRIKGQRGSLRSNWKFIGVDLELFGIADFVIFKVPIKAIIRNATSLQASKPGLKTWYRDQNLTPYLCDDEFVVSIASYECFIMIKDVFIERYNTWEICARAWVEDNEEADYPPLGILRDLYNQGDQIITMYLEDGFKLIKHLEPLCVSCIQTYGIFTPRKYWFQSQMIKSYYDELQSLNLKLQIPDNRTECAQNFIKTIIQAKLTPQQYCELFSLQKHWGHPVLYNDVALDKVKKHAQSTKILKPKVMFETFCVFKFIVAKNHYHSQGSWYKTTHDLHLTPYLRQHIVSNSFPSQAEIYQHLWEWYFVEHEPLFSTKIISDLSIFIKDRATAVNRECWDSVFDRSVLGYNPPVRFQSKRVPEQFLGQADFSLNQILDFAEKLEYLAPSYRNFSFSLKEKELNIGRTFGKLPYRVRNVQTLAEALLADGLAKAFPSNMMVVTEREQKEALLHQASWHHNSASIGENAIVRGASFVTDLEKYNLAFRYEFTRHFIDYCNRCYGVKNLFDWMHFLIPLCYMHVSDFYSPPHCVTENNRNNPPDCANAYHYHLGGIEGLQQKLWTCISCAQITLVELKTKLKLKSSVMGDNQCITTLSLFPIDAPNDYQENEAELNAARVAVELAITTGYSGIFLKPEETFVHSGFIYFGKKQYLNGVQLPQSLKTMARCGPLSDSIFDDLQGSLASIGTSFERGASETRHIFPSRWIAAFHSMLAVNLLNQNHLGFPLGFSIDVSCFKKPLTFSEKLIALITPQVLGGLSFLNPEKLFYRNISDPLTSGLFQLRNALEFLRKEELFYILIAKKPGLADASDFVMNPLGLNVPGSREIITFLRQTVRENITITSQNRIINSLFHIGSDLEDQRVCEWLLSSNPVMSRFAADIFSRTPSGKRLQVLGYLEGTRTLLASRTISLTTEGTMLMRLRELTKSRWKSWFSYIDALDDDLSESLEKFICTVDVANFLRAYSWSDVLKGKRLIGATLPCLLEQFNVKWVNLSEDLKEQFKLSSDLGSPTDLLQYDCNGLHSKGADNAELNYVSCALDRKIVQKHPSDNRLAWTIGNRAPYIGSRTEDKIGYPPLRVNCPSAALKEAIEMVSRLLWVTQGTADREKLLIPLLNSRVNLDYQTVLNFLPTHYSGNIVHRYNDQYGQHSFMANRMSNTSTRAIISTNTLGKYAGGGQAAVDSNIIFQNTINLGVAVLDITLSLSKLSSTSNVSFRLMLSKCCTRHVPSEYLFFDKPLDVDLNKYMDNELVYDNDPLCSGIKGRLGRVSRSTLSLSLNVSDIGSYDFPTIAAWTLGETIIGSIFSDESSQSTDPISSGCTKTFVTHFLVYPVESIFYAFGANLIVESLSLSRINSIKSLSDLTFLISSTIRNLSHRSLRILQSTFRHELVLTRLAHHIPLISLMLGGSAGEKSSSDAVRLFLTASYQNFINNFSCLMRKNQSPLPVWLYFPSEGQQLKPILKILQRLSCLLTTKKVQNHRPVADTCFLTDNFWVYPSKSTRTNHYYASLNYWRDKANKIKNTSFSHLINYSFSEPSLHASSISSSQEVVNLKHTSRLDETPNMSERAQSTNHEPTALQEVCTEIPYSEQDPAKSYLLLENTRFRDDQKILRHDQKAERGEPLSLQVSSRGCLQALTCPHHPSPSQTTTEPLSMLRNCDAIKAALRSETNDPRLMSSILDMRSLKTPMRIESRNTSLLQPSECLSTSKGKSVLSREQASYLYVDCSNISSISLDSGFRNMSDRNQVQMLINTYKRDLYTCFDSNQFCRFTGVVSSMHYKLYDLLPAGKLGKAICLAEGEGSGARLLLKWKETDYLFFNTLATDSQQEAEILSGRVIPRMLYNIDKLSVLLESRKLILNNLTIQITDITNPLWLDSVIQYLPEDSDILTMDAETTKEETREQLYKTIINIWARTSPNIPKTSIIKVFLLDYGGTLFLMKNAIQYYGQVQLKKPYSSNAKNSEWYLCCGKRRVQRLRVDFPDQVGIFLICKAMSRQRQAIPYWLKHIEKNYPASLHEFFITLGFPSLESSFCHRYTIPFTEGTALFHKVQSYVRQGRQHLHSLMLDYENNSPLLDLRNHFICSLRGKITKYYNDILKLNLVVRAVERGKNWSQLVESLPNMHSVCITHVDHECIGCERRLLLKLDFVRNTKIAEQKLLNRVIGYILFFPFGFSRPK</sequence>
<evidence type="ECO:0000250" key="1"/>
<evidence type="ECO:0000250" key="2">
    <source>
        <dbReference type="UniProtKB" id="P03523"/>
    </source>
</evidence>
<evidence type="ECO:0000250" key="3">
    <source>
        <dbReference type="UniProtKB" id="P28887"/>
    </source>
</evidence>
<evidence type="ECO:0000255" key="4">
    <source>
        <dbReference type="PROSITE-ProRule" id="PRU00539"/>
    </source>
</evidence>
<evidence type="ECO:0000255" key="5">
    <source>
        <dbReference type="PROSITE-ProRule" id="PRU00923"/>
    </source>
</evidence>
<evidence type="ECO:0000305" key="6"/>
<protein>
    <recommendedName>
        <fullName>RNA-directed RNA polymerase L</fullName>
        <shortName>Protein L</shortName>
    </recommendedName>
    <alternativeName>
        <fullName>Large structural protein</fullName>
    </alternativeName>
    <alternativeName>
        <fullName>Replicase</fullName>
    </alternativeName>
    <alternativeName>
        <fullName>Transcriptase</fullName>
    </alternativeName>
    <domain>
        <recommendedName>
            <fullName>RNA-directed RNA polymerase</fullName>
            <ecNumber evidence="3">2.7.7.48</ecNumber>
        </recommendedName>
    </domain>
    <domain>
        <recommendedName>
            <fullName evidence="2">GTP phosphohydrolase</fullName>
            <ecNumber evidence="2">3.6.1.-</ecNumber>
        </recommendedName>
    </domain>
    <domain>
        <recommendedName>
            <fullName evidence="6">GDP polyribonucleotidyltransferase</fullName>
            <ecNumber evidence="2">2.7.7.88</ecNumber>
        </recommendedName>
        <alternativeName>
            <fullName evidence="6">PRNTase</fullName>
        </alternativeName>
    </domain>
    <domain>
        <recommendedName>
            <fullName evidence="6">mRNA cap methyltransferase</fullName>
            <ecNumber evidence="2">2.1.1.375</ecNumber>
        </recommendedName>
        <alternativeName>
            <fullName evidence="2">mRNA (guanine-N(7)-)-methyltransferase</fullName>
            <shortName evidence="2">G-N7-MTase</shortName>
        </alternativeName>
        <alternativeName>
            <fullName evidence="2">mRNA (nucleoside-2'-O-)-methyltransferase</fullName>
            <shortName evidence="2">N1-2'-O-MTase</shortName>
        </alternativeName>
    </domain>
</protein>
<feature type="chain" id="PRO_0000314972" description="RNA-directed RNA polymerase L">
    <location>
        <begin position="1"/>
        <end position="2327"/>
    </location>
</feature>
<feature type="domain" description="RdRp catalytic" evidence="4">
    <location>
        <begin position="628"/>
        <end position="812"/>
    </location>
</feature>
<feature type="domain" description="Mononegavirus-type SAM-dependent 2'-O-MTase" evidence="5">
    <location>
        <begin position="1921"/>
        <end position="2118"/>
    </location>
</feature>
<name>L_MABVR</name>
<gene>
    <name type="primary">L</name>
</gene>